<organism>
    <name type="scientific">Homo sapiens</name>
    <name type="common">Human</name>
    <dbReference type="NCBI Taxonomy" id="9606"/>
    <lineage>
        <taxon>Eukaryota</taxon>
        <taxon>Metazoa</taxon>
        <taxon>Chordata</taxon>
        <taxon>Craniata</taxon>
        <taxon>Vertebrata</taxon>
        <taxon>Euteleostomi</taxon>
        <taxon>Mammalia</taxon>
        <taxon>Eutheria</taxon>
        <taxon>Euarchontoglires</taxon>
        <taxon>Primates</taxon>
        <taxon>Haplorrhini</taxon>
        <taxon>Catarrhini</taxon>
        <taxon>Hominidae</taxon>
        <taxon>Homo</taxon>
    </lineage>
</organism>
<keyword id="KW-0025">Alternative splicing</keyword>
<keyword id="KW-1003">Cell membrane</keyword>
<keyword id="KW-0325">Glycoprotein</keyword>
<keyword id="KW-0472">Membrane</keyword>
<keyword id="KW-0597">Phosphoprotein</keyword>
<keyword id="KW-1267">Proteomics identification</keyword>
<keyword id="KW-1185">Reference proteome</keyword>
<keyword id="KW-0812">Transmembrane</keyword>
<keyword id="KW-1133">Transmembrane helix</keyword>
<keyword id="KW-0813">Transport</keyword>
<accession>Q14542</accession>
<accession>B3KPY7</accession>
<accession>G5E943</accession>
<accession>O43530</accession>
<accession>Q52M84</accession>
<accession>Q96R00</accession>
<accession>Q9UPE0</accession>
<protein>
    <recommendedName>
        <fullName evidence="15">Equilibrative nucleoside transporter 2</fullName>
        <shortName evidence="15">hENT2</shortName>
    </recommendedName>
    <alternativeName>
        <fullName evidence="14">36 kDa nucleolar protein HNP36</fullName>
    </alternativeName>
    <alternativeName>
        <fullName evidence="14">Delayed-early response protein 12</fullName>
    </alternativeName>
    <alternativeName>
        <fullName evidence="16">Equilibrative nitrobenzylmercaptopurine riboside-insensitive nucleoside transporter</fullName>
        <shortName evidence="16">Equilibrative NBMPR-insensitive nucleoside transporter</shortName>
    </alternativeName>
    <alternativeName>
        <fullName>Hydrophobic nucleolar protein, 36 kDa</fullName>
    </alternativeName>
    <alternativeName>
        <fullName evidence="14">Nucleoside transporter, ei-type</fullName>
    </alternativeName>
    <alternativeName>
        <fullName evidence="13">Solute carrier family 29 member 2</fullName>
    </alternativeName>
</protein>
<proteinExistence type="evidence at protein level"/>
<gene>
    <name evidence="26" type="primary">SLC29A2</name>
    <name type="synonym">DER12</name>
    <name type="synonym">ENT2</name>
    <name type="synonym">HNP36</name>
</gene>
<reference key="1">
    <citation type="journal article" date="1995" name="Biochem. Biophys. Res. Commun.">
        <title>A mammalian delayed-early response gene encodes HNP36, a novel, conserved nucleolar protein.</title>
        <authorList>
            <person name="Williams J.B."/>
            <person name="Lanahan A.A."/>
        </authorList>
    </citation>
    <scope>NUCLEOTIDE SEQUENCE [MRNA] (ISOFORM 2)</scope>
    <source>
        <tissue>Heart</tissue>
    </source>
</reference>
<reference key="2">
    <citation type="journal article" date="1997" name="Biochem. J.">
        <title>Molecular cloning and characterization of a nitrobenzylthioinosine-insensitive (ei) equilibrative nucleoside transporter from human placenta.</title>
        <authorList>
            <person name="Griffiths M."/>
            <person name="Yao S.Y."/>
            <person name="Abidi F."/>
            <person name="Phillips S.E."/>
            <person name="Cass C.E."/>
            <person name="Young J.D."/>
            <person name="Baldwin S.A."/>
        </authorList>
    </citation>
    <scope>NUCLEOTIDE SEQUENCE [MRNA] (ISOFORM 1)</scope>
    <scope>FUNCTION</scope>
    <scope>TRANSPORTER ACTIVITY</scope>
    <scope>BIOPHYSICOCHEMICAL PROPERTIES</scope>
    <scope>MISCELLANEOUS</scope>
    <source>
        <tissue>Placenta</tissue>
    </source>
</reference>
<reference key="3">
    <citation type="journal article" date="1998" name="J. Biol. Chem.">
        <title>Cloning of the human equilibrative, nitrobenzylmercaptopurine riboside (NBMPR)-insensitive nucleoside transporter ei by functional expression in a transport-deficient cell line.</title>
        <authorList>
            <person name="Crawford C.R."/>
            <person name="Patel D.H."/>
            <person name="Naeve C."/>
            <person name="Belt J.A."/>
        </authorList>
    </citation>
    <scope>NUCLEOTIDE SEQUENCE [MRNA] (ISOFORM 1)</scope>
    <scope>FUNCTION</scope>
    <scope>TRANSPORTER ACTIVITY</scope>
    <scope>TISSUE SPECIFICITY</scope>
    <scope>MISCELLANEOUS</scope>
</reference>
<reference key="4">
    <citation type="journal article" date="2003" name="Am. J. Physiol.">
        <title>Localization of human equilibrative nucleoside transporters, hENT1 and hENT2, in renal epithelial cells.</title>
        <authorList>
            <person name="Mangravite L.M."/>
            <person name="Xiao G."/>
            <person name="Giacomini K.M."/>
        </authorList>
    </citation>
    <scope>NUCLEOTIDE SEQUENCE [MRNA] (ISOFORM 3)</scope>
    <scope>FUNCTION</scope>
    <scope>TRANSPORTER ACTIVITY</scope>
    <scope>BIOPHYSICOCHEMICAL PROPERTIES</scope>
    <scope>SUBCELLULAR LOCATION</scope>
    <scope>MUTAGENESIS OF LEU-455 AND LEU-456</scope>
</reference>
<reference key="5">
    <citation type="journal article" date="2004" name="Nat. Genet.">
        <title>Complete sequencing and characterization of 21,243 full-length human cDNAs.</title>
        <authorList>
            <person name="Ota T."/>
            <person name="Suzuki Y."/>
            <person name="Nishikawa T."/>
            <person name="Otsuki T."/>
            <person name="Sugiyama T."/>
            <person name="Irie R."/>
            <person name="Wakamatsu A."/>
            <person name="Hayashi K."/>
            <person name="Sato H."/>
            <person name="Nagai K."/>
            <person name="Kimura K."/>
            <person name="Makita H."/>
            <person name="Sekine M."/>
            <person name="Obayashi M."/>
            <person name="Nishi T."/>
            <person name="Shibahara T."/>
            <person name="Tanaka T."/>
            <person name="Ishii S."/>
            <person name="Yamamoto J."/>
            <person name="Saito K."/>
            <person name="Kawai Y."/>
            <person name="Isono Y."/>
            <person name="Nakamura Y."/>
            <person name="Nagahari K."/>
            <person name="Murakami K."/>
            <person name="Yasuda T."/>
            <person name="Iwayanagi T."/>
            <person name="Wagatsuma M."/>
            <person name="Shiratori A."/>
            <person name="Sudo H."/>
            <person name="Hosoiri T."/>
            <person name="Kaku Y."/>
            <person name="Kodaira H."/>
            <person name="Kondo H."/>
            <person name="Sugawara M."/>
            <person name="Takahashi M."/>
            <person name="Kanda K."/>
            <person name="Yokoi T."/>
            <person name="Furuya T."/>
            <person name="Kikkawa E."/>
            <person name="Omura Y."/>
            <person name="Abe K."/>
            <person name="Kamihara K."/>
            <person name="Katsuta N."/>
            <person name="Sato K."/>
            <person name="Tanikawa M."/>
            <person name="Yamazaki M."/>
            <person name="Ninomiya K."/>
            <person name="Ishibashi T."/>
            <person name="Yamashita H."/>
            <person name="Murakawa K."/>
            <person name="Fujimori K."/>
            <person name="Tanai H."/>
            <person name="Kimata M."/>
            <person name="Watanabe M."/>
            <person name="Hiraoka S."/>
            <person name="Chiba Y."/>
            <person name="Ishida S."/>
            <person name="Ono Y."/>
            <person name="Takiguchi S."/>
            <person name="Watanabe S."/>
            <person name="Yosida M."/>
            <person name="Hotuta T."/>
            <person name="Kusano J."/>
            <person name="Kanehori K."/>
            <person name="Takahashi-Fujii A."/>
            <person name="Hara H."/>
            <person name="Tanase T.-O."/>
            <person name="Nomura Y."/>
            <person name="Togiya S."/>
            <person name="Komai F."/>
            <person name="Hara R."/>
            <person name="Takeuchi K."/>
            <person name="Arita M."/>
            <person name="Imose N."/>
            <person name="Musashino K."/>
            <person name="Yuuki H."/>
            <person name="Oshima A."/>
            <person name="Sasaki N."/>
            <person name="Aotsuka S."/>
            <person name="Yoshikawa Y."/>
            <person name="Matsunawa H."/>
            <person name="Ichihara T."/>
            <person name="Shiohata N."/>
            <person name="Sano S."/>
            <person name="Moriya S."/>
            <person name="Momiyama H."/>
            <person name="Satoh N."/>
            <person name="Takami S."/>
            <person name="Terashima Y."/>
            <person name="Suzuki O."/>
            <person name="Nakagawa S."/>
            <person name="Senoh A."/>
            <person name="Mizoguchi H."/>
            <person name="Goto Y."/>
            <person name="Shimizu F."/>
            <person name="Wakebe H."/>
            <person name="Hishigaki H."/>
            <person name="Watanabe T."/>
            <person name="Sugiyama A."/>
            <person name="Takemoto M."/>
            <person name="Kawakami B."/>
            <person name="Yamazaki M."/>
            <person name="Watanabe K."/>
            <person name="Kumagai A."/>
            <person name="Itakura S."/>
            <person name="Fukuzumi Y."/>
            <person name="Fujimori Y."/>
            <person name="Komiyama M."/>
            <person name="Tashiro H."/>
            <person name="Tanigami A."/>
            <person name="Fujiwara T."/>
            <person name="Ono T."/>
            <person name="Yamada K."/>
            <person name="Fujii Y."/>
            <person name="Ozaki K."/>
            <person name="Hirao M."/>
            <person name="Ohmori Y."/>
            <person name="Kawabata A."/>
            <person name="Hikiji T."/>
            <person name="Kobatake N."/>
            <person name="Inagaki H."/>
            <person name="Ikema Y."/>
            <person name="Okamoto S."/>
            <person name="Okitani R."/>
            <person name="Kawakami T."/>
            <person name="Noguchi S."/>
            <person name="Itoh T."/>
            <person name="Shigeta K."/>
            <person name="Senba T."/>
            <person name="Matsumura K."/>
            <person name="Nakajima Y."/>
            <person name="Mizuno T."/>
            <person name="Morinaga M."/>
            <person name="Sasaki M."/>
            <person name="Togashi T."/>
            <person name="Oyama M."/>
            <person name="Hata H."/>
            <person name="Watanabe M."/>
            <person name="Komatsu T."/>
            <person name="Mizushima-Sugano J."/>
            <person name="Satoh T."/>
            <person name="Shirai Y."/>
            <person name="Takahashi Y."/>
            <person name="Nakagawa K."/>
            <person name="Okumura K."/>
            <person name="Nagase T."/>
            <person name="Nomura N."/>
            <person name="Kikuchi H."/>
            <person name="Masuho Y."/>
            <person name="Yamashita R."/>
            <person name="Nakai K."/>
            <person name="Yada T."/>
            <person name="Nakamura Y."/>
            <person name="Ohara O."/>
            <person name="Isogai T."/>
            <person name="Sugano S."/>
        </authorList>
    </citation>
    <scope>NUCLEOTIDE SEQUENCE [LARGE SCALE MRNA] (ISOFORM 1)</scope>
</reference>
<reference key="6">
    <citation type="journal article" date="2006" name="Nature">
        <title>Human chromosome 11 DNA sequence and analysis including novel gene identification.</title>
        <authorList>
            <person name="Taylor T.D."/>
            <person name="Noguchi H."/>
            <person name="Totoki Y."/>
            <person name="Toyoda A."/>
            <person name="Kuroki Y."/>
            <person name="Dewar K."/>
            <person name="Lloyd C."/>
            <person name="Itoh T."/>
            <person name="Takeda T."/>
            <person name="Kim D.-W."/>
            <person name="She X."/>
            <person name="Barlow K.F."/>
            <person name="Bloom T."/>
            <person name="Bruford E."/>
            <person name="Chang J.L."/>
            <person name="Cuomo C.A."/>
            <person name="Eichler E."/>
            <person name="FitzGerald M.G."/>
            <person name="Jaffe D.B."/>
            <person name="LaButti K."/>
            <person name="Nicol R."/>
            <person name="Park H.-S."/>
            <person name="Seaman C."/>
            <person name="Sougnez C."/>
            <person name="Yang X."/>
            <person name="Zimmer A.R."/>
            <person name="Zody M.C."/>
            <person name="Birren B.W."/>
            <person name="Nusbaum C."/>
            <person name="Fujiyama A."/>
            <person name="Hattori M."/>
            <person name="Rogers J."/>
            <person name="Lander E.S."/>
            <person name="Sakaki Y."/>
        </authorList>
    </citation>
    <scope>NUCLEOTIDE SEQUENCE [LARGE SCALE GENOMIC DNA]</scope>
</reference>
<reference key="7">
    <citation type="submission" date="2005-07" db="EMBL/GenBank/DDBJ databases">
        <authorList>
            <person name="Mural R.J."/>
            <person name="Istrail S."/>
            <person name="Sutton G.G."/>
            <person name="Florea L."/>
            <person name="Halpern A.L."/>
            <person name="Mobarry C.M."/>
            <person name="Lippert R."/>
            <person name="Walenz B."/>
            <person name="Shatkay H."/>
            <person name="Dew I."/>
            <person name="Miller J.R."/>
            <person name="Flanigan M.J."/>
            <person name="Edwards N.J."/>
            <person name="Bolanos R."/>
            <person name="Fasulo D."/>
            <person name="Halldorsson B.V."/>
            <person name="Hannenhalli S."/>
            <person name="Turner R."/>
            <person name="Yooseph S."/>
            <person name="Lu F."/>
            <person name="Nusskern D.R."/>
            <person name="Shue B.C."/>
            <person name="Zheng X.H."/>
            <person name="Zhong F."/>
            <person name="Delcher A.L."/>
            <person name="Huson D.H."/>
            <person name="Kravitz S.A."/>
            <person name="Mouchard L."/>
            <person name="Reinert K."/>
            <person name="Remington K.A."/>
            <person name="Clark A.G."/>
            <person name="Waterman M.S."/>
            <person name="Eichler E.E."/>
            <person name="Adams M.D."/>
            <person name="Hunkapiller M.W."/>
            <person name="Myers E.W."/>
            <person name="Venter J.C."/>
        </authorList>
    </citation>
    <scope>NUCLEOTIDE SEQUENCE [LARGE SCALE GENOMIC DNA]</scope>
</reference>
<reference key="8">
    <citation type="journal article" date="2004" name="Genome Res.">
        <title>The status, quality, and expansion of the NIH full-length cDNA project: the Mammalian Gene Collection (MGC).</title>
        <authorList>
            <consortium name="The MGC Project Team"/>
        </authorList>
    </citation>
    <scope>NUCLEOTIDE SEQUENCE [LARGE SCALE MRNA]</scope>
    <source>
        <tissue>Liver</tissue>
    </source>
</reference>
<reference key="9">
    <citation type="journal article" date="2000" name="J. Biol. Chem.">
        <title>Kinetic and pharmacological properties of cloned human equilibrative nucleoside transporters, ENT1 and ENT2, stably expressed in nucleoside transporter-deficient PK15 cells. Ent2 exhibits a low affinity for guanosine and cytidine but a high affinity for inosine.</title>
        <authorList>
            <person name="Ward J.L."/>
            <person name="Sherali A."/>
            <person name="Mo Z.P."/>
            <person name="Tse C.M."/>
        </authorList>
    </citation>
    <scope>FUNCTION</scope>
    <scope>TRANSPORTER ACTIVITY</scope>
    <scope>BIOPHYSICOCHEMICAL PROPERTIES</scope>
    <scope>GLYCOSYLATION</scope>
    <scope>MISCELLANEOUS</scope>
</reference>
<reference key="10">
    <citation type="journal article" date="2003" name="Arch. Biochem. Biophys.">
        <title>Functional analysis of site-directed glycosylation mutants of the human equilibrative nucleoside transporter-2.</title>
        <authorList>
            <person name="Ward J.L."/>
            <person name="Leung G.P."/>
            <person name="Toan S.V."/>
            <person name="Tse C.-M."/>
        </authorList>
    </citation>
    <scope>FUNCTION</scope>
    <scope>TRANSPORTER ACTIVITY</scope>
    <scope>BIOPHYSICOCHEMICAL PROPERTIES</scope>
    <scope>GLYCOSYLATION AT ASN-48 AND ASN-57</scope>
    <scope>MUTAGENESIS OF ASN-48 AND ASN-57</scope>
    <scope>MISCELLANEOUS</scope>
</reference>
<reference key="11">
    <citation type="journal article" date="2009" name="Anal. Chem.">
        <title>Lys-N and trypsin cover complementary parts of the phosphoproteome in a refined SCX-based approach.</title>
        <authorList>
            <person name="Gauci S."/>
            <person name="Helbig A.O."/>
            <person name="Slijper M."/>
            <person name="Krijgsveld J."/>
            <person name="Heck A.J."/>
            <person name="Mohammed S."/>
        </authorList>
    </citation>
    <scope>IDENTIFICATION BY MASS SPECTROMETRY [LARGE SCALE ANALYSIS]</scope>
</reference>
<reference key="12">
    <citation type="journal article" date="2010" name="Sci. Signal.">
        <title>Quantitative phosphoproteomics reveals widespread full phosphorylation site occupancy during mitosis.</title>
        <authorList>
            <person name="Olsen J.V."/>
            <person name="Vermeulen M."/>
            <person name="Santamaria A."/>
            <person name="Kumar C."/>
            <person name="Miller M.L."/>
            <person name="Jensen L.J."/>
            <person name="Gnad F."/>
            <person name="Cox J."/>
            <person name="Jensen T.S."/>
            <person name="Nigg E.A."/>
            <person name="Brunak S."/>
            <person name="Mann M."/>
        </authorList>
    </citation>
    <scope>PHOSPHORYLATION [LARGE SCALE ANALYSIS] AT SER-252</scope>
    <scope>IDENTIFICATION BY MASS SPECTROMETRY [LARGE SCALE ANALYSIS]</scope>
    <source>
        <tissue>Cervix carcinoma</tissue>
    </source>
</reference>
<reference key="13">
    <citation type="journal article" date="2011" name="J. Biol. Chem.">
        <title>Nucleobase transport by human equilibrative nucleoside transporter 1 (hENT1).</title>
        <authorList>
            <person name="Yao S.Y."/>
            <person name="Ng A.M."/>
            <person name="Cass C.E."/>
            <person name="Baldwin S.A."/>
            <person name="Young J.D."/>
        </authorList>
    </citation>
    <scope>FUNCTION</scope>
    <scope>TRANSPORTER ACTIVITY</scope>
    <scope>BIOPHYSICOCHEMICAL PROPERTIES</scope>
    <scope>MISCELLANEOUS</scope>
</reference>
<reference key="14">
    <citation type="journal article" date="2011" name="Sci. Signal.">
        <title>System-wide temporal characterization of the proteome and phosphoproteome of human embryonic stem cell differentiation.</title>
        <authorList>
            <person name="Rigbolt K.T."/>
            <person name="Prokhorova T.A."/>
            <person name="Akimov V."/>
            <person name="Henningsen J."/>
            <person name="Johansen P.T."/>
            <person name="Kratchmarova I."/>
            <person name="Kassem M."/>
            <person name="Mann M."/>
            <person name="Olsen J.V."/>
            <person name="Blagoev B."/>
        </authorList>
    </citation>
    <scope>PHOSPHORYLATION [LARGE SCALE ANALYSIS] AT SER-252</scope>
    <scope>IDENTIFICATION BY MASS SPECTROMETRY [LARGE SCALE ANALYSIS]</scope>
</reference>
<reference key="15">
    <citation type="journal article" date="2013" name="J. Pharmacol. Exp. Ther.">
        <title>Basolateral uptake of nucleosides by Sertoli cells is mediated primarily by equilibrative nucleoside transporter 1.</title>
        <authorList>
            <person name="Klein D.M."/>
            <person name="Evans K.K."/>
            <person name="Hardwick R.N."/>
            <person name="Dantzler W.H."/>
            <person name="Wright S.H."/>
            <person name="Cherrington N.J."/>
        </authorList>
    </citation>
    <scope>FUNCTION</scope>
    <scope>SUBCELLULAR LOCATION</scope>
    <scope>TISSUE SPECIFICITY</scope>
</reference>
<reference key="16">
    <citation type="journal article" date="2013" name="J. Proteome Res.">
        <title>Toward a comprehensive characterization of a human cancer cell phosphoproteome.</title>
        <authorList>
            <person name="Zhou H."/>
            <person name="Di Palma S."/>
            <person name="Preisinger C."/>
            <person name="Peng M."/>
            <person name="Polat A.N."/>
            <person name="Heck A.J."/>
            <person name="Mohammed S."/>
        </authorList>
    </citation>
    <scope>IDENTIFICATION BY MASS SPECTROMETRY [LARGE SCALE ANALYSIS]</scope>
    <source>
        <tissue>Cervix carcinoma</tissue>
        <tissue>Erythroleukemia</tissue>
    </source>
</reference>
<reference key="17">
    <citation type="journal article" date="2016" name="Cell. Mol. Life Sci.">
        <title>Novel nuclear hENT2 isoforms regulate cell cycle progression via controlling nucleoside transport and nuclear reservoir.</title>
        <authorList>
            <person name="Grane-Boladeras N."/>
            <person name="Spring C.M."/>
            <person name="Hanna W.J."/>
            <person name="Pastor-Anglada M."/>
            <person name="Coe I.R."/>
        </authorList>
    </citation>
    <scope>CAUTION</scope>
</reference>
<reference key="18">
    <citation type="journal article" date="2006" name="Drug Metab. Dispos.">
        <title>Functional characterization and haplotype analysis of polymorphisms in the human equilibrative nucleoside transporter, ENT2.</title>
        <authorList>
            <person name="Owen R.P."/>
            <person name="Lagpacan L.L."/>
            <person name="Taylor T.R."/>
            <person name="De La Cruz M."/>
            <person name="Huang C.C."/>
            <person name="Kawamoto M."/>
            <person name="Johns S.J."/>
            <person name="Stryke D."/>
            <person name="Ferrin T.E."/>
            <person name="Giacomini K.M."/>
        </authorList>
    </citation>
    <scope>FUNCTION</scope>
    <scope>TRANSPORTER ACTIVITY</scope>
    <scope>VARIANTS TYR-5; LYS-68; LEU-94 AND 184-SER--VAL-186 DELINS MET</scope>
    <scope>CHARACTERIZATION OF VARIANTS TYR-5; LYS-68; LEU-94 AND 184-SER--VAL-186 DELINS MET</scope>
</reference>
<name>S29A2_HUMAN</name>
<evidence type="ECO:0000250" key="1">
    <source>
        <dbReference type="UniProtKB" id="O54699"/>
    </source>
</evidence>
<evidence type="ECO:0000255" key="2"/>
<evidence type="ECO:0000269" key="3">
    <source>
    </source>
</evidence>
<evidence type="ECO:0000269" key="4">
    <source>
    </source>
</evidence>
<evidence type="ECO:0000269" key="5">
    <source>
    </source>
</evidence>
<evidence type="ECO:0000269" key="6">
    <source>
    </source>
</evidence>
<evidence type="ECO:0000269" key="7">
    <source>
    </source>
</evidence>
<evidence type="ECO:0000269" key="8">
    <source>
    </source>
</evidence>
<evidence type="ECO:0000269" key="9">
    <source>
    </source>
</evidence>
<evidence type="ECO:0000269" key="10">
    <source>
    </source>
</evidence>
<evidence type="ECO:0000269" key="11">
    <source>
    </source>
</evidence>
<evidence type="ECO:0000303" key="12">
    <source>
    </source>
</evidence>
<evidence type="ECO:0000303" key="13">
    <source>
    </source>
</evidence>
<evidence type="ECO:0000303" key="14">
    <source>
    </source>
</evidence>
<evidence type="ECO:0000303" key="15">
    <source>
    </source>
</evidence>
<evidence type="ECO:0000303" key="16">
    <source>
    </source>
</evidence>
<evidence type="ECO:0000305" key="17"/>
<evidence type="ECO:0000305" key="18">
    <source>
    </source>
</evidence>
<evidence type="ECO:0000305" key="19">
    <source>
    </source>
</evidence>
<evidence type="ECO:0000305" key="20">
    <source>
    </source>
</evidence>
<evidence type="ECO:0000305" key="21">
    <source>
    </source>
</evidence>
<evidence type="ECO:0000305" key="22">
    <source>
    </source>
</evidence>
<evidence type="ECO:0000305" key="23">
    <source>
    </source>
</evidence>
<evidence type="ECO:0000305" key="24">
    <source>
    </source>
</evidence>
<evidence type="ECO:0000305" key="25">
    <source>
    </source>
</evidence>
<evidence type="ECO:0000312" key="26">
    <source>
        <dbReference type="HGNC" id="HGNC:11004"/>
    </source>
</evidence>
<evidence type="ECO:0007744" key="27">
    <source>
    </source>
</evidence>
<evidence type="ECO:0007744" key="28">
    <source>
    </source>
</evidence>
<sequence>MARGDAPRDSYHLVGISFFILGLGTLLPWNFFITAIPYFQARLAGAGNSTARILSTNHTGPEDAFNFNNWVTLLSQLPLLLFTLLNSFLYQCVPETVRILGSLLAILLLFALTAALVKVDMSPGPFFSITMASVCFINSFSAVLQGSLFGQLGTMPSTYSTLFLSGQGLAGIFAALAMLLSMASGVDAETSALGYFITPCVGILMSIVCYLSLPHLKFARYYLANKSSQAQAQELETKAELLQSDENGIPSSPQKVALTLDLDLEKEPESEPDEPQKPGKPSVFTVFQKIWLTALCLVLVFTVTLSVFPAITAMVTSSTSPGKWSQFFNPICCFLLFNIMDWLGRSLTSYFLWPDEDSRLLPLLVCLRFLFVPLFMLCHVPQRSRLPILFPQDAYFITFMLLFAVSNGYLVSLTMCLAPRQVLPHEREVAGALMTFFLALGLSCGASLSFLFKALL</sequence>
<comment type="function">
    <text evidence="1 3 4 5 6 7 8 10 11">Bidirectional uniporter involved in the facilitative transport of nucleosides and nucleobases, and contributes to maintaining their cellular homeostasis (PubMed:10722669, PubMed:12527552, PubMed:12590919, PubMed:16214850, PubMed:21795683, PubMed:9396714, PubMed:9478986). Functions as a Na(+)-independent, passive transporter (PubMed:9478986). Involved in the transport of nucleosides such as inosine, adenosine, uridine, thymidine, cytidine and guanosine (PubMed:10722669, PubMed:12527552, PubMed:12590919, PubMed:16214850, PubMed:21795683, PubMed:9396714, PubMed:9478986). Also able to transport purine nucleobases (hypoxanthine, adenine, guanine) and pyrimidine nucleobases (thymine, uracil) (PubMed:16214850, PubMed:21795683). Involved in nucleoside transport at basolateral membrane of kidney cells, allowing liver absorption of nucleoside metabolites (PubMed:12527552). Mediates apical nucleoside uptake into Sertoli cells, thereby regulating the transport of nucleosides in testis across the blood-testis-barrier (PubMed:23639800). Mediates both the influx and efflux of hypoxanthine in skeletal muscle microvascular endothelial cells to control the amount of intracellular hypoxanthine available for xanthine oxidase-mediated ROS production (By similarity).</text>
</comment>
<comment type="function">
    <molecule>Isoform 3</molecule>
    <text evidence="4">Non functional nucleoside transporter protein for adenosine or thymidine transport. Does not express on cell membrane.</text>
</comment>
<comment type="catalytic activity">
    <reaction evidence="3 4 6">
        <text>inosine(in) = inosine(out)</text>
        <dbReference type="Rhea" id="RHEA:75375"/>
        <dbReference type="ChEBI" id="CHEBI:17596"/>
    </reaction>
    <physiologicalReaction direction="left-to-right" evidence="18 19 21">
        <dbReference type="Rhea" id="RHEA:75376"/>
    </physiologicalReaction>
    <physiologicalReaction direction="right-to-left" evidence="18 19 21">
        <dbReference type="Rhea" id="RHEA:75377"/>
    </physiologicalReaction>
</comment>
<comment type="catalytic activity">
    <reaction evidence="3 4">
        <text>adenosine(in) = adenosine(out)</text>
        <dbReference type="Rhea" id="RHEA:75343"/>
        <dbReference type="ChEBI" id="CHEBI:16335"/>
    </reaction>
    <physiologicalReaction direction="left-to-right" evidence="18 19">
        <dbReference type="Rhea" id="RHEA:75344"/>
    </physiologicalReaction>
    <physiologicalReaction direction="right-to-left" evidence="18 19">
        <dbReference type="Rhea" id="RHEA:75345"/>
    </physiologicalReaction>
</comment>
<comment type="catalytic activity">
    <reaction evidence="3 5 6 7 10 11">
        <text>uridine(out) = uridine(in)</text>
        <dbReference type="Rhea" id="RHEA:71519"/>
        <dbReference type="ChEBI" id="CHEBI:16704"/>
    </reaction>
    <physiologicalReaction direction="left-to-right" evidence="18 19 21 22 24 25">
        <dbReference type="Rhea" id="RHEA:71520"/>
    </physiologicalReaction>
    <physiologicalReaction direction="right-to-left" evidence="18 19 21 22 24 25">
        <dbReference type="Rhea" id="RHEA:71521"/>
    </physiologicalReaction>
</comment>
<comment type="catalytic activity">
    <reaction evidence="4">
        <text>thymidine(in) = thymidine(out)</text>
        <dbReference type="Rhea" id="RHEA:75363"/>
        <dbReference type="ChEBI" id="CHEBI:17748"/>
    </reaction>
    <physiologicalReaction direction="left-to-right" evidence="19">
        <dbReference type="Rhea" id="RHEA:75364"/>
    </physiologicalReaction>
    <physiologicalReaction direction="right-to-left" evidence="19">
        <dbReference type="Rhea" id="RHEA:75365"/>
    </physiologicalReaction>
</comment>
<comment type="catalytic activity">
    <reaction evidence="6 7">
        <text>hypoxanthine(out) = hypoxanthine(in)</text>
        <dbReference type="Rhea" id="RHEA:71515"/>
        <dbReference type="ChEBI" id="CHEBI:17368"/>
    </reaction>
    <physiologicalReaction direction="left-to-right" evidence="21 22">
        <dbReference type="Rhea" id="RHEA:71516"/>
    </physiologicalReaction>
    <physiologicalReaction direction="right-to-left" evidence="21 22">
        <dbReference type="Rhea" id="RHEA:71517"/>
    </physiologicalReaction>
</comment>
<comment type="catalytic activity">
    <reaction evidence="7">
        <text>adenine(out) = adenine(in)</text>
        <dbReference type="Rhea" id="RHEA:71523"/>
        <dbReference type="ChEBI" id="CHEBI:16708"/>
    </reaction>
    <physiologicalReaction direction="left-to-right" evidence="22">
        <dbReference type="Rhea" id="RHEA:71524"/>
    </physiologicalReaction>
    <physiologicalReaction direction="right-to-left" evidence="22">
        <dbReference type="Rhea" id="RHEA:71525"/>
    </physiologicalReaction>
</comment>
<comment type="catalytic activity">
    <reaction evidence="3 5">
        <text>cytidine(in) = cytidine(out)</text>
        <dbReference type="Rhea" id="RHEA:75367"/>
        <dbReference type="ChEBI" id="CHEBI:17562"/>
    </reaction>
    <physiologicalReaction direction="left-to-right" evidence="18 20">
        <dbReference type="Rhea" id="RHEA:75368"/>
    </physiologicalReaction>
    <physiologicalReaction direction="right-to-left" evidence="18 20">
        <dbReference type="Rhea" id="RHEA:75369"/>
    </physiologicalReaction>
</comment>
<comment type="catalytic activity">
    <reaction evidence="7">
        <text>thymine(out) = thymine(in)</text>
        <dbReference type="Rhea" id="RHEA:71527"/>
        <dbReference type="ChEBI" id="CHEBI:17821"/>
    </reaction>
    <physiologicalReaction direction="left-to-right" evidence="22">
        <dbReference type="Rhea" id="RHEA:71528"/>
    </physiologicalReaction>
    <physiologicalReaction direction="right-to-left" evidence="22">
        <dbReference type="Rhea" id="RHEA:71529"/>
    </physiologicalReaction>
</comment>
<comment type="catalytic activity">
    <reaction evidence="7">
        <text>uracil(in) = uracil(out)</text>
        <dbReference type="Rhea" id="RHEA:69404"/>
        <dbReference type="ChEBI" id="CHEBI:17568"/>
    </reaction>
    <physiologicalReaction direction="left-to-right" evidence="22">
        <dbReference type="Rhea" id="RHEA:69405"/>
    </physiologicalReaction>
    <physiologicalReaction direction="right-to-left" evidence="22">
        <dbReference type="Rhea" id="RHEA:69406"/>
    </physiologicalReaction>
</comment>
<comment type="catalytic activity">
    <reaction evidence="7">
        <text>guanine(out) = guanine(in)</text>
        <dbReference type="Rhea" id="RHEA:71531"/>
        <dbReference type="ChEBI" id="CHEBI:16235"/>
    </reaction>
    <physiologicalReaction direction="left-to-right" evidence="22">
        <dbReference type="Rhea" id="RHEA:71532"/>
    </physiologicalReaction>
    <physiologicalReaction direction="right-to-left" evidence="22">
        <dbReference type="Rhea" id="RHEA:71533"/>
    </physiologicalReaction>
</comment>
<comment type="catalytic activity">
    <reaction evidence="6">
        <text>guanosine(in) = guanosine(out)</text>
        <dbReference type="Rhea" id="RHEA:75371"/>
        <dbReference type="ChEBI" id="CHEBI:16750"/>
    </reaction>
    <physiologicalReaction direction="left-to-right" evidence="21">
        <dbReference type="Rhea" id="RHEA:75372"/>
    </physiologicalReaction>
    <physiologicalReaction direction="right-to-left" evidence="21">
        <dbReference type="Rhea" id="RHEA:75373"/>
    </physiologicalReaction>
</comment>
<comment type="biophysicochemical properties">
    <kinetics>
        <KM evidence="3">50 uM for inosine</KM>
        <KM evidence="4">75.9 uM for adenosine</KM>
        <KM evidence="3">140 uM for adenosine</KM>
        <KM evidence="10">200 uM for uridine</KM>
        <KM evidence="3">250 uM for uridine</KM>
        <KM evidence="5">330 uM for uridine</KM>
        <KM evidence="7">500 uM for uridine</KM>
        <KM evidence="3">710 uM for thymidine</KM>
        <KM evidence="7">1500 uM for hypoxanthine</KM>
        <KM evidence="7">1800 uM for adenine</KM>
        <KM evidence="5">3900 uM for cytidine</KM>
        <KM evidence="3">5610 uM for cytidine</KM>
        <KM evidence="7">6000 uM for thymine</KM>
        <Vmax evidence="3">72.0 pmol/min/mg enzyme for inosine uptake</Vmax>
        <Vmax evidence="3">1147.0 pmol/min/mg enzyme for adenosine uptake</Vmax>
        <Vmax evidence="3">2055.0 pmol/min/mg enzyme for uridine uptake</Vmax>
        <Vmax evidence="3">2486.0 pmol/min/mg enzyme for thymidine uptake</Vmax>
        <Vmax evidence="3">9740.0 pmol/min/mg enzyme for cytidine uptake</Vmax>
    </kinetics>
</comment>
<comment type="subcellular location">
    <subcellularLocation>
        <location evidence="8">Apical cell membrane</location>
        <topology evidence="17">Multi-pass membrane protein</topology>
    </subcellularLocation>
    <subcellularLocation>
        <location evidence="4">Basolateral cell membrane</location>
        <topology evidence="17">Multi-pass membrane protein</topology>
    </subcellularLocation>
    <text evidence="8">Localized to the apical membrane of Sertoli cells.</text>
</comment>
<comment type="alternative products">
    <event type="alternative splicing"/>
    <isoform>
        <id>Q14542-1</id>
        <name>1</name>
        <name>Long</name>
        <sequence type="displayed"/>
    </isoform>
    <isoform>
        <id>Q14542-2</id>
        <name>2</name>
        <name>Short</name>
        <name>HNP36</name>
        <sequence type="described" ref="VSP_040728 VSP_040729"/>
    </isoform>
    <isoform>
        <id>Q14542-3</id>
        <name>3</name>
        <name>hENT2A</name>
        <sequence type="described" ref="VSP_040730 VSP_040731"/>
    </isoform>
    <isoform>
        <id>Q14542-4</id>
        <name>4</name>
        <sequence type="described" ref="VSP_061920"/>
    </isoform>
</comment>
<comment type="tissue specificity">
    <text evidence="8 11">Highly expressed in skeletal muscle (PubMed:9478986). Expressed in liver, lung, placenta, brain, heart, kidney and ovarian tissues (PubMed:9478986). Expressed in testis at the blood-brain-barrier (PubMed:23639800).</text>
</comment>
<comment type="PTM">
    <text evidence="3 5">Glycosylated.</text>
</comment>
<comment type="miscellaneous">
    <text evidence="3 5 7 10 11">Transport activity is insensitive to nanomolar concentrations of the inhibitor nitrobenzylmercaptopurine riboside (NBMPR) (PubMed:10722669, PubMed:12590919, PubMed:21795683, PubMed:9396714, PubMed:9478986). Inhibited by higher concentrations of NBMPR (1uM-10uM) (PubMed:10722669, PubMed:12590919, PubMed:9396714, PubMed:9478986).</text>
</comment>
<comment type="miscellaneous">
    <molecule>Isoform 2</molecule>
    <text evidence="17">May be produced at very low levels due to a premature stop codon in the mRNA, leading to nonsense-mediated mRNA decay.</text>
</comment>
<comment type="similarity">
    <text evidence="17">Belongs to the SLC29A/ENT transporter (TC 2.A.57) family.</text>
</comment>
<comment type="caution">
    <text evidence="9 23">The nuclear function of SLC29A2/ENT2 is unclear. A study reported that under proliferative conditions, two SLC29A2/ENT2 nuclear isoforms recruited SLC29A2/ENT2 to the nuclear envelope in order to translocate nucleosides into the nucleus for incorporation into DNA during replication (PubMed:27271752). However, the physiological existence of these isoforms has yet to be proven.</text>
</comment>
<comment type="sequence caution" evidence="17">
    <conflict type="erroneous translation">
        <sequence resource="EMBL-CDS" id="CAA60380"/>
    </conflict>
    <text>Wrong choice of CDS.</text>
</comment>
<dbReference type="EMBL" id="X86681">
    <property type="protein sequence ID" value="CAA60380.1"/>
    <property type="status" value="ALT_SEQ"/>
    <property type="molecule type" value="mRNA"/>
</dbReference>
<dbReference type="EMBL" id="AF029358">
    <property type="protein sequence ID" value="AAC39526.1"/>
    <property type="molecule type" value="mRNA"/>
</dbReference>
<dbReference type="EMBL" id="AF034102">
    <property type="protein sequence ID" value="AAB97834.1"/>
    <property type="molecule type" value="mRNA"/>
</dbReference>
<dbReference type="EMBL" id="AK057041">
    <property type="protein sequence ID" value="BAG51849.1"/>
    <property type="molecule type" value="mRNA"/>
</dbReference>
<dbReference type="EMBL" id="AF401235">
    <property type="protein sequence ID" value="AAK92533.1"/>
    <property type="molecule type" value="mRNA"/>
</dbReference>
<dbReference type="EMBL" id="AP001107">
    <property type="status" value="NOT_ANNOTATED_CDS"/>
    <property type="molecule type" value="Genomic_DNA"/>
</dbReference>
<dbReference type="EMBL" id="CH471076">
    <property type="protein sequence ID" value="EAW74521.1"/>
    <property type="molecule type" value="Genomic_DNA"/>
</dbReference>
<dbReference type="EMBL" id="CH471076">
    <property type="protein sequence ID" value="EAW74519.1"/>
    <property type="molecule type" value="Genomic_DNA"/>
</dbReference>
<dbReference type="EMBL" id="CH471076">
    <property type="protein sequence ID" value="EAW74522.1"/>
    <property type="molecule type" value="Genomic_DNA"/>
</dbReference>
<dbReference type="EMBL" id="BC093634">
    <property type="protein sequence ID" value="AAH93634.1"/>
    <property type="molecule type" value="mRNA"/>
</dbReference>
<dbReference type="CCDS" id="CCDS73326.1">
    <molecule id="Q14542-4"/>
</dbReference>
<dbReference type="CCDS" id="CCDS8137.1">
    <molecule id="Q14542-1"/>
</dbReference>
<dbReference type="PIR" id="JC4196">
    <property type="entry name" value="JC4196"/>
</dbReference>
<dbReference type="RefSeq" id="NP_001287797.1">
    <molecule id="Q14542-1"/>
    <property type="nucleotide sequence ID" value="NM_001300868.2"/>
</dbReference>
<dbReference type="RefSeq" id="NP_001287798.1">
    <molecule id="Q14542-4"/>
    <property type="nucleotide sequence ID" value="NM_001300869.2"/>
</dbReference>
<dbReference type="RefSeq" id="NP_001523.2">
    <molecule id="Q14542-1"/>
    <property type="nucleotide sequence ID" value="NM_001532.2"/>
</dbReference>
<dbReference type="RefSeq" id="XP_016873121.1">
    <molecule id="Q14542-1"/>
    <property type="nucleotide sequence ID" value="XM_017017632.2"/>
</dbReference>
<dbReference type="RefSeq" id="XP_016873126.1">
    <property type="nucleotide sequence ID" value="XM_017017637.1"/>
</dbReference>
<dbReference type="RefSeq" id="XP_047282818.1">
    <molecule id="Q14542-1"/>
    <property type="nucleotide sequence ID" value="XM_047426862.1"/>
</dbReference>
<dbReference type="RefSeq" id="XP_047282819.1">
    <molecule id="Q14542-4"/>
    <property type="nucleotide sequence ID" value="XM_047426863.1"/>
</dbReference>
<dbReference type="RefSeq" id="XP_047282820.1">
    <molecule id="Q14542-3"/>
    <property type="nucleotide sequence ID" value="XM_047426864.1"/>
</dbReference>
<dbReference type="RefSeq" id="XP_054224581.1">
    <molecule id="Q14542-1"/>
    <property type="nucleotide sequence ID" value="XM_054368606.1"/>
</dbReference>
<dbReference type="RefSeq" id="XP_054224582.1">
    <molecule id="Q14542-1"/>
    <property type="nucleotide sequence ID" value="XM_054368607.1"/>
</dbReference>
<dbReference type="RefSeq" id="XP_054224583.1">
    <molecule id="Q14542-4"/>
    <property type="nucleotide sequence ID" value="XM_054368608.1"/>
</dbReference>
<dbReference type="RefSeq" id="XP_054224584.1">
    <molecule id="Q14542-3"/>
    <property type="nucleotide sequence ID" value="XM_054368609.1"/>
</dbReference>
<dbReference type="SMR" id="Q14542"/>
<dbReference type="BioGRID" id="109419">
    <property type="interactions" value="26"/>
</dbReference>
<dbReference type="CORUM" id="Q14542"/>
<dbReference type="FunCoup" id="Q14542">
    <property type="interactions" value="71"/>
</dbReference>
<dbReference type="IntAct" id="Q14542">
    <property type="interactions" value="4"/>
</dbReference>
<dbReference type="MINT" id="Q14542"/>
<dbReference type="STRING" id="9606.ENSP00000440329"/>
<dbReference type="BindingDB" id="Q14542"/>
<dbReference type="ChEMBL" id="CHEMBL3509606"/>
<dbReference type="DrugBank" id="DB00640">
    <property type="generic name" value="Adenosine"/>
</dbReference>
<dbReference type="DrugBank" id="DB00993">
    <property type="generic name" value="Azathioprine"/>
</dbReference>
<dbReference type="DrugBank" id="DB00900">
    <property type="generic name" value="Didanosine"/>
</dbReference>
<dbReference type="DrugBank" id="DB00898">
    <property type="generic name" value="Ethanol"/>
</dbReference>
<dbReference type="DrugBank" id="DB00441">
    <property type="generic name" value="Gemcitabine"/>
</dbReference>
<dbReference type="DrugBank" id="DB01033">
    <property type="generic name" value="Mercaptopurine"/>
</dbReference>
<dbReference type="DrugBank" id="DB09327">
    <property type="generic name" value="Tegafur-uracil"/>
</dbReference>
<dbReference type="DrugBank" id="DB00432">
    <property type="generic name" value="Trifluridine"/>
</dbReference>
<dbReference type="DrugBank" id="DB00943">
    <property type="generic name" value="Zalcitabine"/>
</dbReference>
<dbReference type="DrugBank" id="DB00495">
    <property type="generic name" value="Zidovudine"/>
</dbReference>
<dbReference type="TCDB" id="2.A.57.1.8">
    <property type="family name" value="the equilibrative nucleoside transporter (ent) family"/>
</dbReference>
<dbReference type="GlyCosmos" id="Q14542">
    <property type="glycosylation" value="3 sites, No reported glycans"/>
</dbReference>
<dbReference type="GlyGen" id="Q14542">
    <property type="glycosylation" value="3 sites"/>
</dbReference>
<dbReference type="iPTMnet" id="Q14542"/>
<dbReference type="PhosphoSitePlus" id="Q14542"/>
<dbReference type="SwissPalm" id="Q14542"/>
<dbReference type="BioMuta" id="SLC29A2"/>
<dbReference type="DMDM" id="116242781"/>
<dbReference type="jPOST" id="Q14542"/>
<dbReference type="MassIVE" id="Q14542"/>
<dbReference type="PaxDb" id="9606-ENSP00000350024"/>
<dbReference type="PeptideAtlas" id="Q14542"/>
<dbReference type="ProteomicsDB" id="33823"/>
<dbReference type="ProteomicsDB" id="60037">
    <molecule id="Q14542-1"/>
</dbReference>
<dbReference type="ProteomicsDB" id="60039">
    <molecule id="Q14542-3"/>
</dbReference>
<dbReference type="Pumba" id="Q14542"/>
<dbReference type="Antibodypedia" id="16257">
    <property type="antibodies" value="136 antibodies from 24 providers"/>
</dbReference>
<dbReference type="DNASU" id="3177"/>
<dbReference type="Ensembl" id="ENST00000311161.11">
    <molecule id="Q14542-4"/>
    <property type="protein sequence ID" value="ENSP00000311250.7"/>
    <property type="gene ID" value="ENSG00000174669.12"/>
</dbReference>
<dbReference type="Ensembl" id="ENST00000357440.7">
    <molecule id="Q14542-1"/>
    <property type="protein sequence ID" value="ENSP00000350024.2"/>
    <property type="gene ID" value="ENSG00000174669.12"/>
</dbReference>
<dbReference type="Ensembl" id="ENST00000540386.5">
    <molecule id="Q14542-3"/>
    <property type="protein sequence ID" value="ENSP00000444870.1"/>
    <property type="gene ID" value="ENSG00000174669.12"/>
</dbReference>
<dbReference type="Ensembl" id="ENST00000541567.5">
    <molecule id="Q14542-2"/>
    <property type="protein sequence ID" value="ENSP00000442116.1"/>
    <property type="gene ID" value="ENSG00000174669.12"/>
</dbReference>
<dbReference type="Ensembl" id="ENST00000544554.5">
    <molecule id="Q14542-1"/>
    <property type="protein sequence ID" value="ENSP00000439456.1"/>
    <property type="gene ID" value="ENSG00000174669.12"/>
</dbReference>
<dbReference type="Ensembl" id="ENST00000546034.1">
    <molecule id="Q14542-1"/>
    <property type="protein sequence ID" value="ENSP00000440329.1"/>
    <property type="gene ID" value="ENSG00000174669.12"/>
</dbReference>
<dbReference type="Ensembl" id="ENST00000619145.4">
    <molecule id="Q14542-4"/>
    <property type="protein sequence ID" value="ENSP00000481944.1"/>
    <property type="gene ID" value="ENSG00000174669.12"/>
</dbReference>
<dbReference type="GeneID" id="3177"/>
<dbReference type="KEGG" id="hsa:3177"/>
<dbReference type="MANE-Select" id="ENST00000357440.7">
    <property type="protein sequence ID" value="ENSP00000350024.2"/>
    <property type="RefSeq nucleotide sequence ID" value="NM_001532.3"/>
    <property type="RefSeq protein sequence ID" value="NP_001523.2"/>
</dbReference>
<dbReference type="UCSC" id="uc001oht.4">
    <molecule id="Q14542-1"/>
    <property type="organism name" value="human"/>
</dbReference>
<dbReference type="AGR" id="HGNC:11004"/>
<dbReference type="CTD" id="3177"/>
<dbReference type="DisGeNET" id="3177"/>
<dbReference type="GeneCards" id="SLC29A2"/>
<dbReference type="HGNC" id="HGNC:11004">
    <property type="gene designation" value="SLC29A2"/>
</dbReference>
<dbReference type="HPA" id="ENSG00000174669">
    <property type="expression patterns" value="Group enriched (skeletal muscle, tongue)"/>
</dbReference>
<dbReference type="MIM" id="602110">
    <property type="type" value="gene"/>
</dbReference>
<dbReference type="neXtProt" id="NX_Q14542"/>
<dbReference type="OpenTargets" id="ENSG00000174669"/>
<dbReference type="PharmGKB" id="PA191"/>
<dbReference type="VEuPathDB" id="HostDB:ENSG00000174669"/>
<dbReference type="eggNOG" id="KOG1479">
    <property type="taxonomic scope" value="Eukaryota"/>
</dbReference>
<dbReference type="GeneTree" id="ENSGT00950000182898"/>
<dbReference type="HOGENOM" id="CLU_021611_6_0_1"/>
<dbReference type="InParanoid" id="Q14542"/>
<dbReference type="OMA" id="YQCIPEA"/>
<dbReference type="OrthoDB" id="46396at2759"/>
<dbReference type="PAN-GO" id="Q14542">
    <property type="GO annotations" value="8 GO annotations based on evolutionary models"/>
</dbReference>
<dbReference type="PhylomeDB" id="Q14542"/>
<dbReference type="TreeFam" id="TF313950"/>
<dbReference type="PathwayCommons" id="Q14542"/>
<dbReference type="Reactome" id="R-HSA-83936">
    <property type="pathway name" value="Transport of nucleosides and free purine and pyrimidine bases across the plasma membrane"/>
</dbReference>
<dbReference type="Reactome" id="R-HSA-9748787">
    <property type="pathway name" value="Azathioprine ADME"/>
</dbReference>
<dbReference type="SignaLink" id="Q14542"/>
<dbReference type="BioGRID-ORCS" id="3177">
    <property type="hits" value="16 hits in 1155 CRISPR screens"/>
</dbReference>
<dbReference type="ChiTaRS" id="SLC29A2">
    <property type="organism name" value="human"/>
</dbReference>
<dbReference type="GeneWiki" id="Equilibrative_nucleoside_transporter_2"/>
<dbReference type="GenomeRNAi" id="3177"/>
<dbReference type="Pharos" id="Q14542">
    <property type="development level" value="Tbio"/>
</dbReference>
<dbReference type="PRO" id="PR:Q14542"/>
<dbReference type="Proteomes" id="UP000005640">
    <property type="component" value="Chromosome 11"/>
</dbReference>
<dbReference type="RNAct" id="Q14542">
    <property type="molecule type" value="protein"/>
</dbReference>
<dbReference type="Bgee" id="ENSG00000174669">
    <property type="expression patterns" value="Expressed in gastrocnemius and 149 other cell types or tissues"/>
</dbReference>
<dbReference type="ExpressionAtlas" id="Q14542">
    <property type="expression patterns" value="baseline and differential"/>
</dbReference>
<dbReference type="GO" id="GO:0016324">
    <property type="term" value="C:apical plasma membrane"/>
    <property type="evidence" value="ECO:0000314"/>
    <property type="project" value="UniProtKB"/>
</dbReference>
<dbReference type="GO" id="GO:0016323">
    <property type="term" value="C:basolateral plasma membrane"/>
    <property type="evidence" value="ECO:0000314"/>
    <property type="project" value="UniProtKB"/>
</dbReference>
<dbReference type="GO" id="GO:0005730">
    <property type="term" value="C:nucleolus"/>
    <property type="evidence" value="ECO:0000304"/>
    <property type="project" value="ProtInc"/>
</dbReference>
<dbReference type="GO" id="GO:0005886">
    <property type="term" value="C:plasma membrane"/>
    <property type="evidence" value="ECO:0000318"/>
    <property type="project" value="GO_Central"/>
</dbReference>
<dbReference type="GO" id="GO:0015207">
    <property type="term" value="F:adenine transmembrane transporter activity"/>
    <property type="evidence" value="ECO:0000314"/>
    <property type="project" value="UniProtKB"/>
</dbReference>
<dbReference type="GO" id="GO:0015212">
    <property type="term" value="F:cytidine transmembrane transporter activity"/>
    <property type="evidence" value="ECO:0000314"/>
    <property type="project" value="UniProtKB"/>
</dbReference>
<dbReference type="GO" id="GO:0015208">
    <property type="term" value="F:guanine transmembrane transporter activity"/>
    <property type="evidence" value="ECO:0000314"/>
    <property type="project" value="UniProtKB"/>
</dbReference>
<dbReference type="GO" id="GO:0005326">
    <property type="term" value="F:neurotransmitter transmembrane transporter activity"/>
    <property type="evidence" value="ECO:0000314"/>
    <property type="project" value="ARUK-UCL"/>
</dbReference>
<dbReference type="GO" id="GO:0015205">
    <property type="term" value="F:nucleobase transmembrane transporter activity"/>
    <property type="evidence" value="ECO:0000314"/>
    <property type="project" value="UniProtKB"/>
</dbReference>
<dbReference type="GO" id="GO:0005337">
    <property type="term" value="F:nucleoside transmembrane transporter activity"/>
    <property type="evidence" value="ECO:0000314"/>
    <property type="project" value="UniProtKB"/>
</dbReference>
<dbReference type="GO" id="GO:0015211">
    <property type="term" value="F:purine nucleoside transmembrane transporter activity"/>
    <property type="evidence" value="ECO:0000314"/>
    <property type="project" value="ARUK-UCL"/>
</dbReference>
<dbReference type="GO" id="GO:0015210">
    <property type="term" value="F:uracil transmembrane transporter activity"/>
    <property type="evidence" value="ECO:0000314"/>
    <property type="project" value="UniProtKB"/>
</dbReference>
<dbReference type="GO" id="GO:0015213">
    <property type="term" value="F:uridine transmembrane transporter activity"/>
    <property type="evidence" value="ECO:0000314"/>
    <property type="project" value="UniProtKB"/>
</dbReference>
<dbReference type="GO" id="GO:0015853">
    <property type="term" value="P:adenine transport"/>
    <property type="evidence" value="ECO:0000314"/>
    <property type="project" value="UniProtKB"/>
</dbReference>
<dbReference type="GO" id="GO:0032238">
    <property type="term" value="P:adenosine transport"/>
    <property type="evidence" value="ECO:0000314"/>
    <property type="project" value="UniProtKB"/>
</dbReference>
<dbReference type="GO" id="GO:0015861">
    <property type="term" value="P:cytidine transport"/>
    <property type="evidence" value="ECO:0000314"/>
    <property type="project" value="UniProtKB"/>
</dbReference>
<dbReference type="GO" id="GO:1903716">
    <property type="term" value="P:guanine transmembrane transport"/>
    <property type="evidence" value="ECO:0000314"/>
    <property type="project" value="UniProtKB"/>
</dbReference>
<dbReference type="GO" id="GO:0015854">
    <property type="term" value="P:guanine transport"/>
    <property type="evidence" value="ECO:0000318"/>
    <property type="project" value="GO_Central"/>
</dbReference>
<dbReference type="GO" id="GO:0035344">
    <property type="term" value="P:hypoxanthine transport"/>
    <property type="evidence" value="ECO:0000314"/>
    <property type="project" value="UniProtKB"/>
</dbReference>
<dbReference type="GO" id="GO:0035340">
    <property type="term" value="P:inosine transport"/>
    <property type="evidence" value="ECO:0000314"/>
    <property type="project" value="UniProtKB"/>
</dbReference>
<dbReference type="GO" id="GO:0006836">
    <property type="term" value="P:neurotransmitter transport"/>
    <property type="evidence" value="ECO:0000314"/>
    <property type="project" value="ARUK-UCL"/>
</dbReference>
<dbReference type="GO" id="GO:0001504">
    <property type="term" value="P:neurotransmitter uptake"/>
    <property type="evidence" value="ECO:0000250"/>
    <property type="project" value="ARUK-UCL"/>
</dbReference>
<dbReference type="GO" id="GO:0015851">
    <property type="term" value="P:nucleobase transport"/>
    <property type="evidence" value="ECO:0000314"/>
    <property type="project" value="UniProtKB"/>
</dbReference>
<dbReference type="GO" id="GO:1901642">
    <property type="term" value="P:nucleoside transmembrane transport"/>
    <property type="evidence" value="ECO:0000314"/>
    <property type="project" value="UniProtKB"/>
</dbReference>
<dbReference type="GO" id="GO:0015858">
    <property type="term" value="P:nucleoside transport"/>
    <property type="evidence" value="ECO:0000314"/>
    <property type="project" value="UniProtKB"/>
</dbReference>
<dbReference type="GO" id="GO:1904823">
    <property type="term" value="P:purine nucleobase transmembrane transport"/>
    <property type="evidence" value="ECO:0000314"/>
    <property type="project" value="UniProtKB"/>
</dbReference>
<dbReference type="GO" id="GO:0015860">
    <property type="term" value="P:purine nucleoside transmembrane transport"/>
    <property type="evidence" value="ECO:0000314"/>
    <property type="project" value="ARUK-UCL"/>
</dbReference>
<dbReference type="GO" id="GO:0072531">
    <property type="term" value="P:pyrimidine-containing compound transmembrane transport"/>
    <property type="evidence" value="ECO:0000314"/>
    <property type="project" value="ARUK-UCL"/>
</dbReference>
<dbReference type="GO" id="GO:0035364">
    <property type="term" value="P:thymine transport"/>
    <property type="evidence" value="ECO:0000314"/>
    <property type="project" value="UniProtKB"/>
</dbReference>
<dbReference type="GO" id="GO:0150104">
    <property type="term" value="P:transport across blood-brain barrier"/>
    <property type="evidence" value="ECO:0000303"/>
    <property type="project" value="ARUK-UCL"/>
</dbReference>
<dbReference type="GO" id="GO:1903791">
    <property type="term" value="P:uracil transmembrane transport"/>
    <property type="evidence" value="ECO:0000314"/>
    <property type="project" value="UniProtKB"/>
</dbReference>
<dbReference type="GO" id="GO:0015862">
    <property type="term" value="P:uridine transmembrane transport"/>
    <property type="evidence" value="ECO:0000314"/>
    <property type="project" value="UniProtKB"/>
</dbReference>
<dbReference type="GO" id="GO:0006855">
    <property type="term" value="P:xenobiotic transmembrane transport"/>
    <property type="evidence" value="ECO:0000304"/>
    <property type="project" value="Reactome"/>
</dbReference>
<dbReference type="FunFam" id="1.20.1250.20:FF:000359">
    <property type="entry name" value="equilibrative nucleoside transporter 2"/>
    <property type="match status" value="1"/>
</dbReference>
<dbReference type="Gene3D" id="1.20.1250.20">
    <property type="entry name" value="MFS general substrate transporter like domains"/>
    <property type="match status" value="1"/>
</dbReference>
<dbReference type="InterPro" id="IPR034764">
    <property type="entry name" value="ENT1/ENT2"/>
</dbReference>
<dbReference type="InterPro" id="IPR002259">
    <property type="entry name" value="Eqnu_transpt"/>
</dbReference>
<dbReference type="InterPro" id="IPR036259">
    <property type="entry name" value="MFS_trans_sf"/>
</dbReference>
<dbReference type="NCBIfam" id="TIGR00939">
    <property type="entry name" value="2a57"/>
    <property type="match status" value="1"/>
</dbReference>
<dbReference type="PANTHER" id="PTHR10332">
    <property type="entry name" value="EQUILIBRATIVE NUCLEOSIDE TRANSPORTER"/>
    <property type="match status" value="1"/>
</dbReference>
<dbReference type="PANTHER" id="PTHR10332:SF8">
    <property type="entry name" value="EQUILIBRATIVE NUCLEOSIDE TRANSPORTER 2"/>
    <property type="match status" value="1"/>
</dbReference>
<dbReference type="Pfam" id="PF01733">
    <property type="entry name" value="Nucleoside_tran"/>
    <property type="match status" value="1"/>
</dbReference>
<dbReference type="PIRSF" id="PIRSF016379">
    <property type="entry name" value="ENT"/>
    <property type="match status" value="1"/>
</dbReference>
<dbReference type="PRINTS" id="PR01130">
    <property type="entry name" value="DERENTRNSPRT"/>
</dbReference>
<dbReference type="SUPFAM" id="SSF103473">
    <property type="entry name" value="MFS general substrate transporter"/>
    <property type="match status" value="1"/>
</dbReference>
<feature type="chain" id="PRO_0000209340" description="Equilibrative nucleoside transporter 2">
    <location>
        <begin position="1"/>
        <end position="456"/>
    </location>
</feature>
<feature type="transmembrane region" description="Helical" evidence="2">
    <location>
        <begin position="13"/>
        <end position="33"/>
    </location>
</feature>
<feature type="transmembrane region" description="Helical" evidence="2">
    <location>
        <begin position="70"/>
        <end position="90"/>
    </location>
</feature>
<feature type="transmembrane region" description="Helical" evidence="2">
    <location>
        <begin position="99"/>
        <end position="119"/>
    </location>
</feature>
<feature type="transmembrane region" description="Helical" evidence="2">
    <location>
        <begin position="124"/>
        <end position="144"/>
    </location>
</feature>
<feature type="transmembrane region" description="Helical" evidence="2">
    <location>
        <begin position="162"/>
        <end position="182"/>
    </location>
</feature>
<feature type="transmembrane region" description="Helical" evidence="2">
    <location>
        <begin position="193"/>
        <end position="213"/>
    </location>
</feature>
<feature type="transmembrane region" description="Helical" evidence="2">
    <location>
        <begin position="291"/>
        <end position="311"/>
    </location>
</feature>
<feature type="transmembrane region" description="Helical" evidence="2">
    <location>
        <begin position="324"/>
        <end position="344"/>
    </location>
</feature>
<feature type="transmembrane region" description="Helical" evidence="2">
    <location>
        <begin position="360"/>
        <end position="380"/>
    </location>
</feature>
<feature type="transmembrane region" description="Helical" evidence="2">
    <location>
        <begin position="386"/>
        <end position="406"/>
    </location>
</feature>
<feature type="transmembrane region" description="Helical" evidence="2">
    <location>
        <begin position="432"/>
        <end position="452"/>
    </location>
</feature>
<feature type="modified residue" description="Phosphoserine" evidence="27 28">
    <location>
        <position position="252"/>
    </location>
</feature>
<feature type="glycosylation site" description="N-linked (GlcNAc...) asparagine" evidence="5">
    <location>
        <position position="48"/>
    </location>
</feature>
<feature type="glycosylation site" description="N-linked (GlcNAc...) asparagine" evidence="5">
    <location>
        <position position="57"/>
    </location>
</feature>
<feature type="glycosylation site" description="N-linked (GlcNAc...) asparagine" evidence="2">
    <location>
        <position position="225"/>
    </location>
</feature>
<feature type="splice variant" id="VSP_040728" description="In isoform 2." evidence="14">
    <original>VPETVRILGSLLAILLLFALTAALVKVDMSPGPFFSITMASVCFINSFSAVLQGSLFGQLGTMPSTYSTLFLSGQGLAGIFAALAMLLSMASGVDAETSALGYFITPCVG</original>
    <variation>AGQGGHEPRTLLLHHHGLRLLHQLLQCSPTGQPLRAAGHHALHLQHPLPQRPGPGWDLCCPCHAPVHGQWRGRRDLCPGVLYHALCGHPHVHRVLPEPASPEVCPLLPGQ</variation>
    <location>
        <begin position="93"/>
        <end position="202"/>
    </location>
</feature>
<feature type="splice variant" id="VSP_040729" description="In isoform 2." evidence="14">
    <location>
        <begin position="203"/>
        <end position="456"/>
    </location>
</feature>
<feature type="splice variant" id="VSP_061920" description="In isoform 4.">
    <original>ENGIPSSPQKVALTLDLDLEKEPESEPDEPQKPGKPSVFTVFQKIWLTALCLVLVFTVTLSVFPAITAMVTSSTSPGKWSQFFNPICCFLLFNIMDWLGRSLTSYFLWPDEDSRLLPLLVCLRFLFVPLFMLCHVPQRSRLPILFPQDAYFITFMLLFAVSNGYLVSLTMCLAPRQVLPHEREVAGALMTFFLALGLSCGASLSFLFKALL</original>
    <variation>LADSAVPCVGLHSHPVRLPRHHSHGDQLHQSWEVESVLQPHLLLPPLQHHGLAGTEPDLLLPVARRGQPAAAPAGLPAVPVRAPLHAVPRAPEVPAAHPLPTGCLLHHLHAALCRF</variation>
    <location>
        <begin position="246"/>
        <end position="456"/>
    </location>
</feature>
<feature type="splice variant" id="VSP_040730" description="In isoform 3." evidence="12">
    <original>IWLTALCLVLVF</original>
    <variation>SPCPSSPPSQPW</variation>
    <location>
        <begin position="290"/>
        <end position="301"/>
    </location>
</feature>
<feature type="splice variant" id="VSP_040731" description="In isoform 3." evidence="12">
    <location>
        <begin position="302"/>
        <end position="456"/>
    </location>
</feature>
<feature type="sequence variant" id="VAR_029289" description="Decreased nucleoside and nucleobase transport; dbSNP:rs8187643." evidence="6">
    <original>D</original>
    <variation>Y</variation>
    <location>
        <position position="5"/>
    </location>
</feature>
<feature type="sequence variant" id="VAR_029290" description="No change in nucleoside and nucleobase transport; dbSNP:rs8187644." evidence="6">
    <original>N</original>
    <variation>K</variation>
    <location>
        <position position="68"/>
    </location>
</feature>
<feature type="sequence variant" id="VAR_029291" description="No change in nucleoside and nucleobase transport; dbSNP:rs8187648." evidence="6">
    <original>P</original>
    <variation>L</variation>
    <location>
        <position position="94"/>
    </location>
</feature>
<feature type="sequence variant" id="VAR_036822" description="Decreased inosine and guanosine transport; no change in uridine and hypoxanthine transport." evidence="6">
    <original>SGV</original>
    <variation>M</variation>
    <location>
        <begin position="184"/>
        <end position="186"/>
    </location>
</feature>
<feature type="mutagenesis site" description="No difference in uridine or cytidine uptake. No differences in Km values and lower Vmax values for either uridine or cytidine uptake; when associated with D-57." evidence="5">
    <original>N</original>
    <variation>D</variation>
    <location>
        <position position="48"/>
    </location>
</feature>
<feature type="mutagenesis site" description="No difference in uridine or cytidine uptake. No differences in Km values and lower Vmax values for either uridine or cytidine uptake; when associated with D-48." evidence="5">
    <original>N</original>
    <variation>D</variation>
    <location>
        <position position="57"/>
    </location>
</feature>
<feature type="mutagenesis site" description="Reduces drastically localization at the cell surface. No effect on uptake of adenosine and thymidine. Reduces drastically localization at the cell surface and induces an significant reduction of adenosine or thymidine uptake; when associated with R-456." evidence="4">
    <original>L</original>
    <variation>R</variation>
    <location>
        <position position="455"/>
    </location>
</feature>
<feature type="mutagenesis site" description="Reduces drastically localization at the cell surface and induces an significant reduction of adenosine or thymidine uptake; when associated with R-455." evidence="4">
    <original>L</original>
    <variation>R</variation>
    <location>
        <position position="456"/>
    </location>
</feature>
<feature type="sequence conflict" description="In Ref. 1; CAA60380 and 2; AAC39526." evidence="17" ref="1 2">
    <original>C</original>
    <variation>Y</variation>
    <location>
        <position position="200"/>
    </location>
</feature>